<gene>
    <name evidence="1" type="primary">trhO</name>
    <name type="ordered locus">CPS_4798</name>
</gene>
<dbReference type="EC" id="1.14.-.-" evidence="1"/>
<dbReference type="EMBL" id="CP000083">
    <property type="protein sequence ID" value="AAZ24148.1"/>
    <property type="molecule type" value="Genomic_DNA"/>
</dbReference>
<dbReference type="RefSeq" id="WP_011045517.1">
    <property type="nucleotide sequence ID" value="NC_003910.7"/>
</dbReference>
<dbReference type="SMR" id="Q47UT5"/>
<dbReference type="STRING" id="167879.CPS_4798"/>
<dbReference type="KEGG" id="cps:CPS_4798"/>
<dbReference type="eggNOG" id="COG1054">
    <property type="taxonomic scope" value="Bacteria"/>
</dbReference>
<dbReference type="HOGENOM" id="CLU_038878_0_0_6"/>
<dbReference type="Proteomes" id="UP000000547">
    <property type="component" value="Chromosome"/>
</dbReference>
<dbReference type="GO" id="GO:0016705">
    <property type="term" value="F:oxidoreductase activity, acting on paired donors, with incorporation or reduction of molecular oxygen"/>
    <property type="evidence" value="ECO:0007669"/>
    <property type="project" value="UniProtKB-UniRule"/>
</dbReference>
<dbReference type="GO" id="GO:0006400">
    <property type="term" value="P:tRNA modification"/>
    <property type="evidence" value="ECO:0007669"/>
    <property type="project" value="UniProtKB-UniRule"/>
</dbReference>
<dbReference type="CDD" id="cd01518">
    <property type="entry name" value="RHOD_YceA"/>
    <property type="match status" value="1"/>
</dbReference>
<dbReference type="Gene3D" id="3.30.70.100">
    <property type="match status" value="1"/>
</dbReference>
<dbReference type="Gene3D" id="3.40.250.10">
    <property type="entry name" value="Rhodanese-like domain"/>
    <property type="match status" value="1"/>
</dbReference>
<dbReference type="HAMAP" id="MF_00469">
    <property type="entry name" value="TrhO"/>
    <property type="match status" value="1"/>
</dbReference>
<dbReference type="InterPro" id="IPR001763">
    <property type="entry name" value="Rhodanese-like_dom"/>
</dbReference>
<dbReference type="InterPro" id="IPR036873">
    <property type="entry name" value="Rhodanese-like_dom_sf"/>
</dbReference>
<dbReference type="InterPro" id="IPR020936">
    <property type="entry name" value="TrhO"/>
</dbReference>
<dbReference type="InterPro" id="IPR040503">
    <property type="entry name" value="TRHO_N"/>
</dbReference>
<dbReference type="NCBIfam" id="NF001136">
    <property type="entry name" value="PRK00142.1-4"/>
    <property type="match status" value="1"/>
</dbReference>
<dbReference type="PANTHER" id="PTHR43268:SF3">
    <property type="entry name" value="RHODANESE-LIKE DOMAIN-CONTAINING PROTEIN 7-RELATED"/>
    <property type="match status" value="1"/>
</dbReference>
<dbReference type="PANTHER" id="PTHR43268">
    <property type="entry name" value="THIOSULFATE SULFURTRANSFERASE/RHODANESE-LIKE DOMAIN-CONTAINING PROTEIN 2"/>
    <property type="match status" value="1"/>
</dbReference>
<dbReference type="Pfam" id="PF00581">
    <property type="entry name" value="Rhodanese"/>
    <property type="match status" value="1"/>
</dbReference>
<dbReference type="Pfam" id="PF17773">
    <property type="entry name" value="UPF0176_N"/>
    <property type="match status" value="1"/>
</dbReference>
<dbReference type="SMART" id="SM00450">
    <property type="entry name" value="RHOD"/>
    <property type="match status" value="1"/>
</dbReference>
<dbReference type="SUPFAM" id="SSF52821">
    <property type="entry name" value="Rhodanese/Cell cycle control phosphatase"/>
    <property type="match status" value="1"/>
</dbReference>
<dbReference type="PROSITE" id="PS50206">
    <property type="entry name" value="RHODANESE_3"/>
    <property type="match status" value="1"/>
</dbReference>
<reference key="1">
    <citation type="journal article" date="2005" name="Proc. Natl. Acad. Sci. U.S.A.">
        <title>The psychrophilic lifestyle as revealed by the genome sequence of Colwellia psychrerythraea 34H through genomic and proteomic analyses.</title>
        <authorList>
            <person name="Methe B.A."/>
            <person name="Nelson K.E."/>
            <person name="Deming J.W."/>
            <person name="Momen B."/>
            <person name="Melamud E."/>
            <person name="Zhang X."/>
            <person name="Moult J."/>
            <person name="Madupu R."/>
            <person name="Nelson W.C."/>
            <person name="Dodson R.J."/>
            <person name="Brinkac L.M."/>
            <person name="Daugherty S.C."/>
            <person name="Durkin A.S."/>
            <person name="DeBoy R.T."/>
            <person name="Kolonay J.F."/>
            <person name="Sullivan S.A."/>
            <person name="Zhou L."/>
            <person name="Davidsen T.M."/>
            <person name="Wu M."/>
            <person name="Huston A.L."/>
            <person name="Lewis M."/>
            <person name="Weaver B."/>
            <person name="Weidman J.F."/>
            <person name="Khouri H."/>
            <person name="Utterback T.R."/>
            <person name="Feldblyum T.V."/>
            <person name="Fraser C.M."/>
        </authorList>
    </citation>
    <scope>NUCLEOTIDE SEQUENCE [LARGE SCALE GENOMIC DNA]</scope>
    <source>
        <strain>34H / ATCC BAA-681</strain>
    </source>
</reference>
<protein>
    <recommendedName>
        <fullName evidence="1">tRNA uridine(34) hydroxylase</fullName>
        <ecNumber evidence="1">1.14.-.-</ecNumber>
    </recommendedName>
    <alternativeName>
        <fullName evidence="1">tRNA hydroxylation protein O</fullName>
    </alternativeName>
</protein>
<proteinExistence type="inferred from homology"/>
<accession>Q47UT5</accession>
<sequence>MSSSEKQLSTPATIQTASTITICALYKFVRLDAYEALREPLSNKMASVDVKGTLLLAAEGINGTIAGPQTGIDTVLAFLGEQPGLDNISHKESYSEENPFHRTKVKLKKEIVTMGIEGIDPNQVVGTYVKPKDWNALISDPEVVLVDTRNDYEIEIGTFKNAINPNTETFREFPDYVAKNLDKNKHKKVAMYCTGGIRCEKSTAYLKEQGFEEVYHLEGGILKYLEEVPSTETMWEGECFVFDGRVAVNHELEQGQYDQCFACRFPLTDVEKESEHYVKGVSCHRCHDKVSEQQRSRYAERQRQISLAEERGESHIGGDIQNIIEERRQEKNDKKAKQANK</sequence>
<evidence type="ECO:0000255" key="1">
    <source>
        <dbReference type="HAMAP-Rule" id="MF_00469"/>
    </source>
</evidence>
<evidence type="ECO:0000256" key="2">
    <source>
        <dbReference type="SAM" id="MobiDB-lite"/>
    </source>
</evidence>
<keyword id="KW-0560">Oxidoreductase</keyword>
<keyword id="KW-0819">tRNA processing</keyword>
<feature type="chain" id="PRO_0000242918" description="tRNA uridine(34) hydroxylase">
    <location>
        <begin position="1"/>
        <end position="341"/>
    </location>
</feature>
<feature type="domain" description="Rhodanese" evidence="1">
    <location>
        <begin position="139"/>
        <end position="233"/>
    </location>
</feature>
<feature type="region of interest" description="Disordered" evidence="2">
    <location>
        <begin position="306"/>
        <end position="341"/>
    </location>
</feature>
<feature type="compositionally biased region" description="Basic and acidic residues" evidence="2">
    <location>
        <begin position="306"/>
        <end position="316"/>
    </location>
</feature>
<feature type="compositionally biased region" description="Basic and acidic residues" evidence="2">
    <location>
        <begin position="324"/>
        <end position="341"/>
    </location>
</feature>
<feature type="active site" description="Cysteine persulfide intermediate" evidence="1">
    <location>
        <position position="193"/>
    </location>
</feature>
<name>TRHO_COLP3</name>
<organism>
    <name type="scientific">Colwellia psychrerythraea (strain 34H / ATCC BAA-681)</name>
    <name type="common">Vibrio psychroerythus</name>
    <dbReference type="NCBI Taxonomy" id="167879"/>
    <lineage>
        <taxon>Bacteria</taxon>
        <taxon>Pseudomonadati</taxon>
        <taxon>Pseudomonadota</taxon>
        <taxon>Gammaproteobacteria</taxon>
        <taxon>Alteromonadales</taxon>
        <taxon>Colwelliaceae</taxon>
        <taxon>Colwellia</taxon>
    </lineage>
</organism>
<comment type="function">
    <text evidence="1">Catalyzes oxygen-dependent 5-hydroxyuridine (ho5U) modification at position 34 in tRNAs.</text>
</comment>
<comment type="catalytic activity">
    <reaction evidence="1">
        <text>uridine(34) in tRNA + AH2 + O2 = 5-hydroxyuridine(34) in tRNA + A + H2O</text>
        <dbReference type="Rhea" id="RHEA:64224"/>
        <dbReference type="Rhea" id="RHEA-COMP:11727"/>
        <dbReference type="Rhea" id="RHEA-COMP:13381"/>
        <dbReference type="ChEBI" id="CHEBI:13193"/>
        <dbReference type="ChEBI" id="CHEBI:15377"/>
        <dbReference type="ChEBI" id="CHEBI:15379"/>
        <dbReference type="ChEBI" id="CHEBI:17499"/>
        <dbReference type="ChEBI" id="CHEBI:65315"/>
        <dbReference type="ChEBI" id="CHEBI:136877"/>
    </reaction>
</comment>
<comment type="similarity">
    <text evidence="1">Belongs to the TrhO family.</text>
</comment>